<keyword id="KW-0346">Stress response</keyword>
<accession>P12952</accession>
<reference key="1">
    <citation type="journal article" date="1989" name="Plant Mol. Biol.">
        <title>A cDNA-based comparison of dehydration-induced proteins (dehydrins) in barley and corn.</title>
        <authorList>
            <person name="Close T.J."/>
            <person name="Kortt A.A."/>
            <person name="Chandler P.M."/>
        </authorList>
    </citation>
    <scope>NUCLEOTIDE SEQUENCE [MRNA]</scope>
    <source>
        <strain>cv. Himalaya</strain>
        <tissue>Seedling</tissue>
    </source>
</reference>
<name>DHN2_HORVU</name>
<comment type="induction">
    <text>By abscisic acid (ABA) and water stress.</text>
</comment>
<comment type="similarity">
    <text evidence="2">Belongs to the plant dehydrin family.</text>
</comment>
<dbReference type="EMBL" id="X15289">
    <property type="protein sequence ID" value="CAA33363.1"/>
    <property type="molecule type" value="mRNA"/>
</dbReference>
<dbReference type="PIR" id="S05543">
    <property type="entry name" value="S05543"/>
</dbReference>
<dbReference type="ExpressionAtlas" id="P12952">
    <property type="expression patterns" value="baseline"/>
</dbReference>
<dbReference type="GO" id="GO:0005829">
    <property type="term" value="C:cytosol"/>
    <property type="evidence" value="ECO:0007669"/>
    <property type="project" value="TreeGrafter"/>
</dbReference>
<dbReference type="GO" id="GO:0009631">
    <property type="term" value="P:cold acclimation"/>
    <property type="evidence" value="ECO:0007669"/>
    <property type="project" value="TreeGrafter"/>
</dbReference>
<dbReference type="GO" id="GO:0009737">
    <property type="term" value="P:response to abscisic acid"/>
    <property type="evidence" value="ECO:0007669"/>
    <property type="project" value="TreeGrafter"/>
</dbReference>
<dbReference type="GO" id="GO:0009414">
    <property type="term" value="P:response to water deprivation"/>
    <property type="evidence" value="ECO:0007669"/>
    <property type="project" value="TreeGrafter"/>
</dbReference>
<dbReference type="InterPro" id="IPR000167">
    <property type="entry name" value="Dehydrin"/>
</dbReference>
<dbReference type="InterPro" id="IPR030513">
    <property type="entry name" value="Dehydrin_CS"/>
</dbReference>
<dbReference type="PANTHER" id="PTHR33346:SF39">
    <property type="entry name" value="DEHYDRIN"/>
    <property type="match status" value="1"/>
</dbReference>
<dbReference type="PANTHER" id="PTHR33346">
    <property type="entry name" value="DEHYDRIN XERO 2-RELATED"/>
    <property type="match status" value="1"/>
</dbReference>
<dbReference type="Pfam" id="PF00257">
    <property type="entry name" value="Dehydrin"/>
    <property type="match status" value="1"/>
</dbReference>
<dbReference type="PROSITE" id="PS00315">
    <property type="entry name" value="DEHYDRIN_1"/>
    <property type="match status" value="1"/>
</dbReference>
<dbReference type="PROSITE" id="PS00823">
    <property type="entry name" value="DEHYDRIN_2"/>
    <property type="match status" value="2"/>
</dbReference>
<organism>
    <name type="scientific">Hordeum vulgare</name>
    <name type="common">Barley</name>
    <dbReference type="NCBI Taxonomy" id="4513"/>
    <lineage>
        <taxon>Eukaryota</taxon>
        <taxon>Viridiplantae</taxon>
        <taxon>Streptophyta</taxon>
        <taxon>Embryophyta</taxon>
        <taxon>Tracheophyta</taxon>
        <taxon>Spermatophyta</taxon>
        <taxon>Magnoliopsida</taxon>
        <taxon>Liliopsida</taxon>
        <taxon>Poales</taxon>
        <taxon>Poaceae</taxon>
        <taxon>BOP clade</taxon>
        <taxon>Pooideae</taxon>
        <taxon>Triticodae</taxon>
        <taxon>Triticeae</taxon>
        <taxon>Hordeinae</taxon>
        <taxon>Hordeum</taxon>
    </lineage>
</organism>
<sequence>MEYQGQTGHATTDKVEEYGQPVAGHGGATGGPTGTHGAAAAAAGTGQLQPTRDDHKTDGVLRRSGSSSSSSSEDDGVGGRRKKGMKEKIKEKLPGGAHKDAAGQQHTPAAGEYAGTGTHGAEATGEKKGVMDKIKEKLPGGQH</sequence>
<protein>
    <recommendedName>
        <fullName>Dehydrin DHN2</fullName>
    </recommendedName>
    <alternativeName>
        <fullName>B9</fullName>
    </alternativeName>
</protein>
<gene>
    <name type="primary">DHN2</name>
</gene>
<feature type="chain" id="PRO_0000100047" description="Dehydrin DHN2">
    <location>
        <begin position="1"/>
        <end position="143"/>
    </location>
</feature>
<feature type="region of interest" description="Disordered" evidence="1">
    <location>
        <begin position="1"/>
        <end position="143"/>
    </location>
</feature>
<feature type="compositionally biased region" description="Polar residues" evidence="1">
    <location>
        <begin position="1"/>
        <end position="10"/>
    </location>
</feature>
<feature type="compositionally biased region" description="Gly residues" evidence="1">
    <location>
        <begin position="24"/>
        <end position="34"/>
    </location>
</feature>
<feature type="compositionally biased region" description="Low complexity" evidence="1">
    <location>
        <begin position="35"/>
        <end position="46"/>
    </location>
</feature>
<feature type="compositionally biased region" description="Basic and acidic residues" evidence="1">
    <location>
        <begin position="51"/>
        <end position="61"/>
    </location>
</feature>
<feature type="compositionally biased region" description="Low complexity" evidence="1">
    <location>
        <begin position="62"/>
        <end position="71"/>
    </location>
</feature>
<feature type="compositionally biased region" description="Basic and acidic residues" evidence="1">
    <location>
        <begin position="86"/>
        <end position="101"/>
    </location>
</feature>
<feature type="compositionally biased region" description="Low complexity" evidence="1">
    <location>
        <begin position="109"/>
        <end position="123"/>
    </location>
</feature>
<feature type="compositionally biased region" description="Basic and acidic residues" evidence="1">
    <location>
        <begin position="124"/>
        <end position="143"/>
    </location>
</feature>
<proteinExistence type="evidence at transcript level"/>
<evidence type="ECO:0000256" key="1">
    <source>
        <dbReference type="SAM" id="MobiDB-lite"/>
    </source>
</evidence>
<evidence type="ECO:0000305" key="2"/>